<sequence length="122" mass="13574">MIQPQTHLNVADNSGARELMCIRIIGASNRRYAHIGDVIVAVIKEAIPNMPLERSEVVRAVIVRTCKELKRDNGIIIRYDDNAAVVIDQEGNPKGTRIFGAIARELRELNFTKIVSLAPEVL</sequence>
<proteinExistence type="inferred from homology"/>
<evidence type="ECO:0000255" key="1">
    <source>
        <dbReference type="HAMAP-Rule" id="MF_01367"/>
    </source>
</evidence>
<evidence type="ECO:0000305" key="2"/>
<organism>
    <name type="scientific">Nicotiana tomentosiformis</name>
    <name type="common">Tobacco</name>
    <dbReference type="NCBI Taxonomy" id="4098"/>
    <lineage>
        <taxon>Eukaryota</taxon>
        <taxon>Viridiplantae</taxon>
        <taxon>Streptophyta</taxon>
        <taxon>Embryophyta</taxon>
        <taxon>Tracheophyta</taxon>
        <taxon>Spermatophyta</taxon>
        <taxon>Magnoliopsida</taxon>
        <taxon>eudicotyledons</taxon>
        <taxon>Gunneridae</taxon>
        <taxon>Pentapetalae</taxon>
        <taxon>asterids</taxon>
        <taxon>lamiids</taxon>
        <taxon>Solanales</taxon>
        <taxon>Solanaceae</taxon>
        <taxon>Nicotianoideae</taxon>
        <taxon>Nicotianeae</taxon>
        <taxon>Nicotiana</taxon>
    </lineage>
</organism>
<accession>Q33BZ6</accession>
<feature type="chain" id="PRO_0000276354" description="Large ribosomal subunit protein uL14c">
    <location>
        <begin position="1"/>
        <end position="122"/>
    </location>
</feature>
<keyword id="KW-0150">Chloroplast</keyword>
<keyword id="KW-0934">Plastid</keyword>
<keyword id="KW-0687">Ribonucleoprotein</keyword>
<keyword id="KW-0689">Ribosomal protein</keyword>
<keyword id="KW-0694">RNA-binding</keyword>
<keyword id="KW-0699">rRNA-binding</keyword>
<comment type="function">
    <text evidence="1">Binds to 23S rRNA.</text>
</comment>
<comment type="subunit">
    <text evidence="1">Part of the 50S ribosomal subunit.</text>
</comment>
<comment type="subcellular location">
    <subcellularLocation>
        <location>Plastid</location>
        <location>Chloroplast</location>
    </subcellularLocation>
</comment>
<comment type="similarity">
    <text evidence="1">Belongs to the universal ribosomal protein uL14 family.</text>
</comment>
<geneLocation type="chloroplast"/>
<reference key="1">
    <citation type="journal article" date="2006" name="Mol. Genet. Genomics">
        <title>The chloroplast genome of Nicotiana sylvestris and Nicotiana tomentosiformis: complete sequencing confirms that the Nicotiana sylvestris progenitor is the maternal genome donor of Nicotiana tabacum.</title>
        <authorList>
            <person name="Yukawa M."/>
            <person name="Tsudzuki T."/>
            <person name="Sugiura M."/>
        </authorList>
    </citation>
    <scope>NUCLEOTIDE SEQUENCE [LARGE SCALE GENOMIC DNA]</scope>
</reference>
<protein>
    <recommendedName>
        <fullName evidence="1">Large ribosomal subunit protein uL14c</fullName>
    </recommendedName>
    <alternativeName>
        <fullName evidence="2">50S ribosomal protein L14, chloroplastic</fullName>
    </alternativeName>
</protein>
<dbReference type="EMBL" id="AB240139">
    <property type="protein sequence ID" value="BAE48039.1"/>
    <property type="molecule type" value="Genomic_DNA"/>
</dbReference>
<dbReference type="RefSeq" id="YP_398900.1">
    <property type="nucleotide sequence ID" value="NC_007602.1"/>
</dbReference>
<dbReference type="SMR" id="Q33BZ6"/>
<dbReference type="GeneID" id="3776289"/>
<dbReference type="KEGG" id="nto:3776289"/>
<dbReference type="OrthoDB" id="274765at2759"/>
<dbReference type="GO" id="GO:0009507">
    <property type="term" value="C:chloroplast"/>
    <property type="evidence" value="ECO:0007669"/>
    <property type="project" value="UniProtKB-SubCell"/>
</dbReference>
<dbReference type="GO" id="GO:0022625">
    <property type="term" value="C:cytosolic large ribosomal subunit"/>
    <property type="evidence" value="ECO:0007669"/>
    <property type="project" value="TreeGrafter"/>
</dbReference>
<dbReference type="GO" id="GO:0070180">
    <property type="term" value="F:large ribosomal subunit rRNA binding"/>
    <property type="evidence" value="ECO:0007669"/>
    <property type="project" value="TreeGrafter"/>
</dbReference>
<dbReference type="GO" id="GO:0003735">
    <property type="term" value="F:structural constituent of ribosome"/>
    <property type="evidence" value="ECO:0007669"/>
    <property type="project" value="InterPro"/>
</dbReference>
<dbReference type="GO" id="GO:0006412">
    <property type="term" value="P:translation"/>
    <property type="evidence" value="ECO:0007669"/>
    <property type="project" value="UniProtKB-UniRule"/>
</dbReference>
<dbReference type="CDD" id="cd00337">
    <property type="entry name" value="Ribosomal_uL14"/>
    <property type="match status" value="1"/>
</dbReference>
<dbReference type="FunFam" id="2.40.150.20:FF:000002">
    <property type="entry name" value="50S ribosomal protein L14, chloroplastic"/>
    <property type="match status" value="1"/>
</dbReference>
<dbReference type="Gene3D" id="2.40.150.20">
    <property type="entry name" value="Ribosomal protein L14"/>
    <property type="match status" value="1"/>
</dbReference>
<dbReference type="HAMAP" id="MF_01367">
    <property type="entry name" value="Ribosomal_uL14"/>
    <property type="match status" value="1"/>
</dbReference>
<dbReference type="InterPro" id="IPR000218">
    <property type="entry name" value="Ribosomal_uL14"/>
</dbReference>
<dbReference type="InterPro" id="IPR005745">
    <property type="entry name" value="Ribosomal_uL14_bac-type"/>
</dbReference>
<dbReference type="InterPro" id="IPR019972">
    <property type="entry name" value="Ribosomal_uL14_CS"/>
</dbReference>
<dbReference type="InterPro" id="IPR036853">
    <property type="entry name" value="Ribosomal_uL14_sf"/>
</dbReference>
<dbReference type="NCBIfam" id="TIGR01067">
    <property type="entry name" value="rplN_bact"/>
    <property type="match status" value="1"/>
</dbReference>
<dbReference type="PANTHER" id="PTHR11761">
    <property type="entry name" value="50S/60S RIBOSOMAL PROTEIN L14/L23"/>
    <property type="match status" value="1"/>
</dbReference>
<dbReference type="PANTHER" id="PTHR11761:SF3">
    <property type="entry name" value="LARGE RIBOSOMAL SUBUNIT PROTEIN UL14M"/>
    <property type="match status" value="1"/>
</dbReference>
<dbReference type="Pfam" id="PF00238">
    <property type="entry name" value="Ribosomal_L14"/>
    <property type="match status" value="1"/>
</dbReference>
<dbReference type="SMART" id="SM01374">
    <property type="entry name" value="Ribosomal_L14"/>
    <property type="match status" value="1"/>
</dbReference>
<dbReference type="SUPFAM" id="SSF50193">
    <property type="entry name" value="Ribosomal protein L14"/>
    <property type="match status" value="1"/>
</dbReference>
<dbReference type="PROSITE" id="PS00049">
    <property type="entry name" value="RIBOSOMAL_L14"/>
    <property type="match status" value="1"/>
</dbReference>
<name>RK14_NICTO</name>
<gene>
    <name evidence="1" type="primary">rpl14</name>
</gene>